<feature type="chain" id="PRO_0000263210" description="Aspartate/glutamate leucyltransferase">
    <location>
        <begin position="1"/>
        <end position="253"/>
    </location>
</feature>
<accession>Q21VY8</accession>
<gene>
    <name evidence="1" type="primary">bpt</name>
    <name type="ordered locus">Rfer_2348</name>
</gene>
<reference key="1">
    <citation type="submission" date="2006-02" db="EMBL/GenBank/DDBJ databases">
        <title>Complete sequence of chromosome of Rhodoferax ferrireducens DSM 15236.</title>
        <authorList>
            <person name="Copeland A."/>
            <person name="Lucas S."/>
            <person name="Lapidus A."/>
            <person name="Barry K."/>
            <person name="Detter J.C."/>
            <person name="Glavina del Rio T."/>
            <person name="Hammon N."/>
            <person name="Israni S."/>
            <person name="Pitluck S."/>
            <person name="Brettin T."/>
            <person name="Bruce D."/>
            <person name="Han C."/>
            <person name="Tapia R."/>
            <person name="Gilna P."/>
            <person name="Kiss H."/>
            <person name="Schmutz J."/>
            <person name="Larimer F."/>
            <person name="Land M."/>
            <person name="Kyrpides N."/>
            <person name="Ivanova N."/>
            <person name="Richardson P."/>
        </authorList>
    </citation>
    <scope>NUCLEOTIDE SEQUENCE [LARGE SCALE GENOMIC DNA]</scope>
    <source>
        <strain>ATCC BAA-621 / DSM 15236 / T118</strain>
    </source>
</reference>
<proteinExistence type="inferred from homology"/>
<comment type="function">
    <text evidence="1">Functions in the N-end rule pathway of protein degradation where it conjugates Leu from its aminoacyl-tRNA to the N-termini of proteins containing an N-terminal aspartate or glutamate.</text>
</comment>
<comment type="catalytic activity">
    <reaction evidence="1">
        <text>N-terminal L-glutamyl-[protein] + L-leucyl-tRNA(Leu) = N-terminal L-leucyl-L-glutamyl-[protein] + tRNA(Leu) + H(+)</text>
        <dbReference type="Rhea" id="RHEA:50412"/>
        <dbReference type="Rhea" id="RHEA-COMP:9613"/>
        <dbReference type="Rhea" id="RHEA-COMP:9622"/>
        <dbReference type="Rhea" id="RHEA-COMP:12664"/>
        <dbReference type="Rhea" id="RHEA-COMP:12668"/>
        <dbReference type="ChEBI" id="CHEBI:15378"/>
        <dbReference type="ChEBI" id="CHEBI:64721"/>
        <dbReference type="ChEBI" id="CHEBI:78442"/>
        <dbReference type="ChEBI" id="CHEBI:78494"/>
        <dbReference type="ChEBI" id="CHEBI:133041"/>
        <dbReference type="EC" id="2.3.2.29"/>
    </reaction>
</comment>
<comment type="catalytic activity">
    <reaction evidence="1">
        <text>N-terminal L-aspartyl-[protein] + L-leucyl-tRNA(Leu) = N-terminal L-leucyl-L-aspartyl-[protein] + tRNA(Leu) + H(+)</text>
        <dbReference type="Rhea" id="RHEA:50420"/>
        <dbReference type="Rhea" id="RHEA-COMP:9613"/>
        <dbReference type="Rhea" id="RHEA-COMP:9622"/>
        <dbReference type="Rhea" id="RHEA-COMP:12669"/>
        <dbReference type="Rhea" id="RHEA-COMP:12674"/>
        <dbReference type="ChEBI" id="CHEBI:15378"/>
        <dbReference type="ChEBI" id="CHEBI:64720"/>
        <dbReference type="ChEBI" id="CHEBI:78442"/>
        <dbReference type="ChEBI" id="CHEBI:78494"/>
        <dbReference type="ChEBI" id="CHEBI:133042"/>
        <dbReference type="EC" id="2.3.2.29"/>
    </reaction>
</comment>
<comment type="subcellular location">
    <subcellularLocation>
        <location evidence="1">Cytoplasm</location>
    </subcellularLocation>
</comment>
<comment type="similarity">
    <text evidence="1">Belongs to the R-transferase family. Bpt subfamily.</text>
</comment>
<keyword id="KW-0012">Acyltransferase</keyword>
<keyword id="KW-0963">Cytoplasm</keyword>
<keyword id="KW-1185">Reference proteome</keyword>
<keyword id="KW-0808">Transferase</keyword>
<name>BPT_ALBFT</name>
<dbReference type="EC" id="2.3.2.29" evidence="1"/>
<dbReference type="EMBL" id="CP000267">
    <property type="protein sequence ID" value="ABD70065.1"/>
    <property type="molecule type" value="Genomic_DNA"/>
</dbReference>
<dbReference type="SMR" id="Q21VY8"/>
<dbReference type="STRING" id="338969.Rfer_2348"/>
<dbReference type="KEGG" id="rfr:Rfer_2348"/>
<dbReference type="eggNOG" id="COG2935">
    <property type="taxonomic scope" value="Bacteria"/>
</dbReference>
<dbReference type="HOGENOM" id="CLU_077607_0_0_4"/>
<dbReference type="Proteomes" id="UP000008332">
    <property type="component" value="Chromosome"/>
</dbReference>
<dbReference type="GO" id="GO:0005737">
    <property type="term" value="C:cytoplasm"/>
    <property type="evidence" value="ECO:0007669"/>
    <property type="project" value="UniProtKB-SubCell"/>
</dbReference>
<dbReference type="GO" id="GO:0004057">
    <property type="term" value="F:arginyl-tRNA--protein transferase activity"/>
    <property type="evidence" value="ECO:0007669"/>
    <property type="project" value="InterPro"/>
</dbReference>
<dbReference type="GO" id="GO:0008914">
    <property type="term" value="F:leucyl-tRNA--protein transferase activity"/>
    <property type="evidence" value="ECO:0007669"/>
    <property type="project" value="UniProtKB-UniRule"/>
</dbReference>
<dbReference type="GO" id="GO:0071596">
    <property type="term" value="P:ubiquitin-dependent protein catabolic process via the N-end rule pathway"/>
    <property type="evidence" value="ECO:0007669"/>
    <property type="project" value="InterPro"/>
</dbReference>
<dbReference type="HAMAP" id="MF_00689">
    <property type="entry name" value="Bpt"/>
    <property type="match status" value="1"/>
</dbReference>
<dbReference type="InterPro" id="IPR016181">
    <property type="entry name" value="Acyl_CoA_acyltransferase"/>
</dbReference>
<dbReference type="InterPro" id="IPR017138">
    <property type="entry name" value="Asp_Glu_LeuTrfase"/>
</dbReference>
<dbReference type="InterPro" id="IPR030700">
    <property type="entry name" value="N-end_Aminoacyl_Trfase"/>
</dbReference>
<dbReference type="InterPro" id="IPR007472">
    <property type="entry name" value="N-end_Aminoacyl_Trfase_C"/>
</dbReference>
<dbReference type="InterPro" id="IPR007471">
    <property type="entry name" value="N-end_Aminoacyl_Trfase_N"/>
</dbReference>
<dbReference type="NCBIfam" id="NF002341">
    <property type="entry name" value="PRK01305.1-1"/>
    <property type="match status" value="1"/>
</dbReference>
<dbReference type="NCBIfam" id="NF002342">
    <property type="entry name" value="PRK01305.1-3"/>
    <property type="match status" value="1"/>
</dbReference>
<dbReference type="NCBIfam" id="NF002346">
    <property type="entry name" value="PRK01305.2-3"/>
    <property type="match status" value="1"/>
</dbReference>
<dbReference type="PANTHER" id="PTHR21367">
    <property type="entry name" value="ARGININE-TRNA-PROTEIN TRANSFERASE 1"/>
    <property type="match status" value="1"/>
</dbReference>
<dbReference type="PANTHER" id="PTHR21367:SF1">
    <property type="entry name" value="ARGINYL-TRNA--PROTEIN TRANSFERASE 1"/>
    <property type="match status" value="1"/>
</dbReference>
<dbReference type="Pfam" id="PF04377">
    <property type="entry name" value="ATE_C"/>
    <property type="match status" value="1"/>
</dbReference>
<dbReference type="Pfam" id="PF04376">
    <property type="entry name" value="ATE_N"/>
    <property type="match status" value="1"/>
</dbReference>
<dbReference type="PIRSF" id="PIRSF037208">
    <property type="entry name" value="ATE_pro_prd"/>
    <property type="match status" value="1"/>
</dbReference>
<dbReference type="SUPFAM" id="SSF55729">
    <property type="entry name" value="Acyl-CoA N-acyltransferases (Nat)"/>
    <property type="match status" value="1"/>
</dbReference>
<evidence type="ECO:0000255" key="1">
    <source>
        <dbReference type="HAMAP-Rule" id="MF_00689"/>
    </source>
</evidence>
<organism>
    <name type="scientific">Albidiferax ferrireducens (strain ATCC BAA-621 / DSM 15236 / T118)</name>
    <name type="common">Rhodoferax ferrireducens</name>
    <dbReference type="NCBI Taxonomy" id="338969"/>
    <lineage>
        <taxon>Bacteria</taxon>
        <taxon>Pseudomonadati</taxon>
        <taxon>Pseudomonadota</taxon>
        <taxon>Betaproteobacteria</taxon>
        <taxon>Burkholderiales</taxon>
        <taxon>Comamonadaceae</taxon>
        <taxon>Rhodoferax</taxon>
    </lineage>
</organism>
<protein>
    <recommendedName>
        <fullName evidence="1">Aspartate/glutamate leucyltransferase</fullName>
        <ecNumber evidence="1">2.3.2.29</ecNumber>
    </recommendedName>
</protein>
<sequence>MQLKELPLNALQFYATSSYPCSYLPGQQARSQVAAPSHLVNGVIYAELVRQGFRRSGLFTYRPYCDGCCACTPVRVLVAEFQPDRSQRRAWSRHSTLQARVLKPSFVQEHYDLYLRYQNTRHAGGGMDHDSVDQYTQFLLQSRVNSRLIEFRETLADGEPGPLKLVSILDVLDDGLSAVYTFYEPESSGSLGTYGVLWQIAEAKKLGLAYVYLGFWIKDSQKMNYKTRFRPLEFLVSGNWRADYPSMPASQLS</sequence>